<accession>Q99SU9</accession>
<sequence>MKIRKSILAGTLAIVLASPLVTNLDKNEAQASTSLPTSNEYQNEKLANELKSLLDELNVNELATGSLNTYYKRTIKISGLKAMYALKSKDFKKMSEAKYQLQKIYNEIDEALKSKY</sequence>
<keyword id="KW-0964">Secreted</keyword>
<keyword id="KW-0732">Signal</keyword>
<keyword id="KW-0843">Virulence</keyword>
<comment type="function">
    <text evidence="1">Involved in countering the first line of host defense mechanisms. Efficiently inhibits opsonization, phagocytosis and killing of S.aureus by human neutrophils. Acts by binding and stabilizing human C3 convertases (C4b2a and C3bBb), leading to their inactivation. The convertases are no longer able to cleave complement C3, therefore preventing further C3b deposition on the bacterial surface and phagocytosis of the bacterium. Also prevents C5a-induced neutrophil responses (By similarity).</text>
</comment>
<comment type="subcellular location">
    <subcellularLocation>
        <location evidence="1">Secreted</location>
    </subcellularLocation>
</comment>
<comment type="similarity">
    <text evidence="3">Belongs to the SCIN family.</text>
</comment>
<feature type="signal peptide" evidence="2">
    <location>
        <begin position="1"/>
        <end position="31"/>
    </location>
</feature>
<feature type="chain" id="PRO_0000319873" description="Staphylococcal complement inhibitor">
    <location>
        <begin position="32"/>
        <end position="116"/>
    </location>
</feature>
<feature type="region of interest" description="Essential for activity" evidence="1">
    <location>
        <begin position="62"/>
        <end position="79"/>
    </location>
</feature>
<organism>
    <name type="scientific">Staphylococcus aureus (strain N315)</name>
    <dbReference type="NCBI Taxonomy" id="158879"/>
    <lineage>
        <taxon>Bacteria</taxon>
        <taxon>Bacillati</taxon>
        <taxon>Bacillota</taxon>
        <taxon>Bacilli</taxon>
        <taxon>Bacillales</taxon>
        <taxon>Staphylococcaceae</taxon>
        <taxon>Staphylococcus</taxon>
    </lineage>
</organism>
<dbReference type="EMBL" id="BA000018">
    <property type="protein sequence ID" value="BAB43028.1"/>
    <property type="molecule type" value="Genomic_DNA"/>
</dbReference>
<dbReference type="PIR" id="D89983">
    <property type="entry name" value="D89983"/>
</dbReference>
<dbReference type="RefSeq" id="WP_000702262.1">
    <property type="nucleotide sequence ID" value="NC_002745.2"/>
</dbReference>
<dbReference type="SMR" id="Q99SU9"/>
<dbReference type="EnsemblBacteria" id="BAB43028">
    <property type="protein sequence ID" value="BAB43028"/>
    <property type="gene ID" value="BAB43028"/>
</dbReference>
<dbReference type="GeneID" id="66840169"/>
<dbReference type="KEGG" id="sau:SA1754"/>
<dbReference type="KEGG" id="vg:1260560"/>
<dbReference type="HOGENOM" id="CLU_166895_0_0_9"/>
<dbReference type="PRO" id="PR:Q99SU9"/>
<dbReference type="GO" id="GO:0005576">
    <property type="term" value="C:extracellular region"/>
    <property type="evidence" value="ECO:0007669"/>
    <property type="project" value="UniProtKB-SubCell"/>
</dbReference>
<dbReference type="Gene3D" id="1.20.1270.10">
    <property type="match status" value="1"/>
</dbReference>
<dbReference type="InterPro" id="IPR029048">
    <property type="entry name" value="HSP70_C_sf"/>
</dbReference>
<dbReference type="InterPro" id="IPR021612">
    <property type="entry name" value="SCIN"/>
</dbReference>
<dbReference type="Pfam" id="PF11546">
    <property type="entry name" value="CompInhib_SCIN"/>
    <property type="match status" value="1"/>
</dbReference>
<reference key="1">
    <citation type="journal article" date="2001" name="Lancet">
        <title>Whole genome sequencing of meticillin-resistant Staphylococcus aureus.</title>
        <authorList>
            <person name="Kuroda M."/>
            <person name="Ohta T."/>
            <person name="Uchiyama I."/>
            <person name="Baba T."/>
            <person name="Yuzawa H."/>
            <person name="Kobayashi I."/>
            <person name="Cui L."/>
            <person name="Oguchi A."/>
            <person name="Aoki K."/>
            <person name="Nagai Y."/>
            <person name="Lian J.-Q."/>
            <person name="Ito T."/>
            <person name="Kanamori M."/>
            <person name="Matsumaru H."/>
            <person name="Maruyama A."/>
            <person name="Murakami H."/>
            <person name="Hosoyama A."/>
            <person name="Mizutani-Ui Y."/>
            <person name="Takahashi N.K."/>
            <person name="Sawano T."/>
            <person name="Inoue R."/>
            <person name="Kaito C."/>
            <person name="Sekimizu K."/>
            <person name="Hirakawa H."/>
            <person name="Kuhara S."/>
            <person name="Goto S."/>
            <person name="Yabuzaki J."/>
            <person name="Kanehisa M."/>
            <person name="Yamashita A."/>
            <person name="Oshima K."/>
            <person name="Furuya K."/>
            <person name="Yoshino C."/>
            <person name="Shiba T."/>
            <person name="Hattori M."/>
            <person name="Ogasawara N."/>
            <person name="Hayashi H."/>
            <person name="Hiramatsu K."/>
        </authorList>
    </citation>
    <scope>NUCLEOTIDE SEQUENCE [LARGE SCALE GENOMIC DNA]</scope>
    <source>
        <strain>N315</strain>
    </source>
</reference>
<gene>
    <name type="primary">scn</name>
    <name type="ordered locus">SA1754</name>
</gene>
<evidence type="ECO:0000250" key="1"/>
<evidence type="ECO:0000255" key="2"/>
<evidence type="ECO:0000305" key="3"/>
<protein>
    <recommendedName>
        <fullName>Staphylococcal complement inhibitor</fullName>
        <shortName>SCIN</shortName>
    </recommendedName>
</protein>
<name>SCIN_STAAN</name>
<proteinExistence type="inferred from homology"/>